<name>HR38_BOMMO</name>
<organism>
    <name type="scientific">Bombyx mori</name>
    <name type="common">Silk moth</name>
    <dbReference type="NCBI Taxonomy" id="7091"/>
    <lineage>
        <taxon>Eukaryota</taxon>
        <taxon>Metazoa</taxon>
        <taxon>Ecdysozoa</taxon>
        <taxon>Arthropoda</taxon>
        <taxon>Hexapoda</taxon>
        <taxon>Insecta</taxon>
        <taxon>Pterygota</taxon>
        <taxon>Neoptera</taxon>
        <taxon>Endopterygota</taxon>
        <taxon>Lepidoptera</taxon>
        <taxon>Glossata</taxon>
        <taxon>Ditrysia</taxon>
        <taxon>Bombycoidea</taxon>
        <taxon>Bombycidae</taxon>
        <taxon>Bombycinae</taxon>
        <taxon>Bombyx</taxon>
    </lineage>
</organism>
<feature type="chain" id="PRO_0000053726" description="Probable nuclear hormone receptor HR38">
    <location>
        <begin position="1" status="less than"/>
        <end position="360"/>
    </location>
</feature>
<feature type="domain" description="NR LBD" evidence="2">
    <location>
        <begin position="122"/>
        <end position="357"/>
    </location>
</feature>
<feature type="DNA-binding region" description="Nuclear receptor" evidence="1">
    <location>
        <begin position="23"/>
        <end position="98"/>
    </location>
</feature>
<feature type="zinc finger region" description="NR C4-type" evidence="1">
    <location>
        <begin position="26"/>
        <end position="46"/>
    </location>
</feature>
<feature type="zinc finger region" description="NR C4-type" evidence="1">
    <location>
        <begin position="62"/>
        <end position="86"/>
    </location>
</feature>
<feature type="region of interest" description="Disordered" evidence="3">
    <location>
        <begin position="1"/>
        <end position="21"/>
    </location>
</feature>
<feature type="non-terminal residue">
    <location>
        <position position="1"/>
    </location>
</feature>
<protein>
    <recommendedName>
        <fullName>Probable nuclear hormone receptor HR38</fullName>
        <shortName>bHR38</shortName>
    </recommendedName>
    <alternativeName>
        <fullName>Nuclear receptor subfamily 4 group A member 4</fullName>
    </alternativeName>
</protein>
<sequence>GSSSPGVAPADNTGPRAAPSSPSQLCAVCGDTAACQHYGVRTCEGCKGFFKRTVQKGSKYVCLAEKSCPVDKRRRNRCQFCWFQKCLAVGMVKEVVRTDSLKGRRGRLPSKPKCPQESPPSPPISLITALVRAHVDTSPDFANLDYSQYREPSPLEPPMSDLEVIQQFYSLLTTSIDMIKLFAEKVPGYGDLCPEDREQLFASARLELFVLRLAYRTALEDTKLTFSNGSVLDKRQCQRSFGDWLHAVLDFSNTSYSMDIDISTFACLCALTLITDRHGLKEPHRVEQVQMKIIGCLRGHMPGGGGSSSGAAPLQRVLGALPELRSLSVKASQRIFYLKLEDLVPAPPLIENMFRASLPF</sequence>
<proteinExistence type="evidence at transcript level"/>
<keyword id="KW-0238">DNA-binding</keyword>
<keyword id="KW-0479">Metal-binding</keyword>
<keyword id="KW-0539">Nucleus</keyword>
<keyword id="KW-0675">Receptor</keyword>
<keyword id="KW-1185">Reference proteome</keyword>
<keyword id="KW-0804">Transcription</keyword>
<keyword id="KW-0805">Transcription regulation</keyword>
<keyword id="KW-0862">Zinc</keyword>
<keyword id="KW-0863">Zinc-finger</keyword>
<comment type="subunit">
    <text>Forms a heterodimer with USP.</text>
</comment>
<comment type="subcellular location">
    <subcellularLocation>
        <location>Nucleus</location>
    </subcellularLocation>
</comment>
<comment type="similarity">
    <text evidence="4">Belongs to the nuclear hormone receptor family. NR4 subfamily.</text>
</comment>
<gene>
    <name type="primary">HR38</name>
    <name type="synonym">NR4A4</name>
</gene>
<accession>P49870</accession>
<reference key="1">
    <citation type="journal article" date="1995" name="Proc. Natl. Acad. Sci. U.S.A.">
        <title>Drosophila hormone receptor 38: a second partner for Drosophila USP suggests an unexpected role for nuclear receptors of the nerve growth factor-induced protein B type.</title>
        <authorList>
            <person name="Sutherland J.D."/>
            <person name="Kozlova T."/>
            <person name="Tzertzinis G."/>
            <person name="Kafatos F.C."/>
        </authorList>
    </citation>
    <scope>NUCLEOTIDE SEQUENCE [MRNA]</scope>
    <source>
        <tissue>Ovary</tissue>
    </source>
</reference>
<dbReference type="EMBL" id="X89247">
    <property type="protein sequence ID" value="CAA61535.1"/>
    <property type="molecule type" value="mRNA"/>
</dbReference>
<dbReference type="PIR" id="S58205">
    <property type="entry name" value="S58205"/>
</dbReference>
<dbReference type="SMR" id="P49870"/>
<dbReference type="DIP" id="DIP-927N"/>
<dbReference type="FunCoup" id="P49870">
    <property type="interactions" value="8"/>
</dbReference>
<dbReference type="STRING" id="7091.P49870"/>
<dbReference type="PaxDb" id="7091-BGIBMGA002964-TA"/>
<dbReference type="eggNOG" id="KOG4217">
    <property type="taxonomic scope" value="Eukaryota"/>
</dbReference>
<dbReference type="HOGENOM" id="CLU_007368_14_1_1"/>
<dbReference type="InParanoid" id="P49870"/>
<dbReference type="Proteomes" id="UP000005204">
    <property type="component" value="Unassembled WGS sequence"/>
</dbReference>
<dbReference type="GO" id="GO:0005634">
    <property type="term" value="C:nucleus"/>
    <property type="evidence" value="ECO:0007669"/>
    <property type="project" value="UniProtKB-SubCell"/>
</dbReference>
<dbReference type="GO" id="GO:0005667">
    <property type="term" value="C:transcription regulator complex"/>
    <property type="evidence" value="ECO:0007669"/>
    <property type="project" value="TreeGrafter"/>
</dbReference>
<dbReference type="GO" id="GO:0035259">
    <property type="term" value="F:nuclear glucocorticoid receptor binding"/>
    <property type="evidence" value="ECO:0007669"/>
    <property type="project" value="TreeGrafter"/>
</dbReference>
<dbReference type="GO" id="GO:0004879">
    <property type="term" value="F:nuclear receptor activity"/>
    <property type="evidence" value="ECO:0007669"/>
    <property type="project" value="InterPro"/>
</dbReference>
<dbReference type="GO" id="GO:0000978">
    <property type="term" value="F:RNA polymerase II cis-regulatory region sequence-specific DNA binding"/>
    <property type="evidence" value="ECO:0007669"/>
    <property type="project" value="TreeGrafter"/>
</dbReference>
<dbReference type="GO" id="GO:0008270">
    <property type="term" value="F:zinc ion binding"/>
    <property type="evidence" value="ECO:0007669"/>
    <property type="project" value="UniProtKB-KW"/>
</dbReference>
<dbReference type="GO" id="GO:0071376">
    <property type="term" value="P:cellular response to corticotropin-releasing hormone stimulus"/>
    <property type="evidence" value="ECO:0007669"/>
    <property type="project" value="TreeGrafter"/>
</dbReference>
<dbReference type="CDD" id="cd06969">
    <property type="entry name" value="NR_DBD_NGFI-B"/>
    <property type="match status" value="1"/>
</dbReference>
<dbReference type="CDD" id="cd07072">
    <property type="entry name" value="NR_LBD_DHR38_like"/>
    <property type="match status" value="1"/>
</dbReference>
<dbReference type="FunFam" id="3.30.50.10:FF:000009">
    <property type="entry name" value="nuclear receptor subfamily 4 group A member 2"/>
    <property type="match status" value="1"/>
</dbReference>
<dbReference type="Gene3D" id="3.30.50.10">
    <property type="entry name" value="Erythroid Transcription Factor GATA-1, subunit A"/>
    <property type="match status" value="1"/>
</dbReference>
<dbReference type="Gene3D" id="1.10.565.10">
    <property type="entry name" value="Retinoid X Receptor"/>
    <property type="match status" value="1"/>
</dbReference>
<dbReference type="InterPro" id="IPR035500">
    <property type="entry name" value="NHR-like_dom_sf"/>
</dbReference>
<dbReference type="InterPro" id="IPR003070">
    <property type="entry name" value="NR4A1-3"/>
</dbReference>
<dbReference type="InterPro" id="IPR000536">
    <property type="entry name" value="Nucl_hrmn_rcpt_lig-bd"/>
</dbReference>
<dbReference type="InterPro" id="IPR001723">
    <property type="entry name" value="Nuclear_hrmn_rcpt"/>
</dbReference>
<dbReference type="InterPro" id="IPR001628">
    <property type="entry name" value="Znf_hrmn_rcpt"/>
</dbReference>
<dbReference type="InterPro" id="IPR013088">
    <property type="entry name" value="Znf_NHR/GATA"/>
</dbReference>
<dbReference type="PANTHER" id="PTHR24085">
    <property type="entry name" value="NUCLEAR HORMONE RECEPTOR"/>
    <property type="match status" value="1"/>
</dbReference>
<dbReference type="PANTHER" id="PTHR24085:SF4">
    <property type="entry name" value="NUCLEAR HORMONE RECEPTOR HR38-RELATED"/>
    <property type="match status" value="1"/>
</dbReference>
<dbReference type="Pfam" id="PF00104">
    <property type="entry name" value="Hormone_recep"/>
    <property type="match status" value="1"/>
</dbReference>
<dbReference type="Pfam" id="PF00105">
    <property type="entry name" value="zf-C4"/>
    <property type="match status" value="1"/>
</dbReference>
<dbReference type="PRINTS" id="PR01284">
    <property type="entry name" value="NUCLEARECPTR"/>
</dbReference>
<dbReference type="PRINTS" id="PR00398">
    <property type="entry name" value="STRDHORMONER"/>
</dbReference>
<dbReference type="PRINTS" id="PR00047">
    <property type="entry name" value="STROIDFINGER"/>
</dbReference>
<dbReference type="SMART" id="SM00430">
    <property type="entry name" value="HOLI"/>
    <property type="match status" value="1"/>
</dbReference>
<dbReference type="SMART" id="SM00399">
    <property type="entry name" value="ZnF_C4"/>
    <property type="match status" value="1"/>
</dbReference>
<dbReference type="SUPFAM" id="SSF57716">
    <property type="entry name" value="Glucocorticoid receptor-like (DNA-binding domain)"/>
    <property type="match status" value="1"/>
</dbReference>
<dbReference type="SUPFAM" id="SSF48508">
    <property type="entry name" value="Nuclear receptor ligand-binding domain"/>
    <property type="match status" value="1"/>
</dbReference>
<dbReference type="PROSITE" id="PS51843">
    <property type="entry name" value="NR_LBD"/>
    <property type="match status" value="1"/>
</dbReference>
<dbReference type="PROSITE" id="PS00031">
    <property type="entry name" value="NUCLEAR_REC_DBD_1"/>
    <property type="match status" value="1"/>
</dbReference>
<dbReference type="PROSITE" id="PS51030">
    <property type="entry name" value="NUCLEAR_REC_DBD_2"/>
    <property type="match status" value="1"/>
</dbReference>
<evidence type="ECO:0000255" key="1">
    <source>
        <dbReference type="PROSITE-ProRule" id="PRU00407"/>
    </source>
</evidence>
<evidence type="ECO:0000255" key="2">
    <source>
        <dbReference type="PROSITE-ProRule" id="PRU01189"/>
    </source>
</evidence>
<evidence type="ECO:0000256" key="3">
    <source>
        <dbReference type="SAM" id="MobiDB-lite"/>
    </source>
</evidence>
<evidence type="ECO:0000305" key="4"/>